<sequence length="296" mass="32535">MEQFRNIGIIGRLGSSQVLDTIRRLKKFLLDRHLHVILEDTIAEVLPGHGLQTSTRKLLGEVCDLVIVVGGDGSLLGAARALARHNIPVLGINRGNLGFLTDIRPDELEEKVAQVLDGHYLVENRFLLQAEVRRHHEAIGQGDALNDVVLHPGKSTRMIEFEIYIDGQFVCSQKADGLIVATPTGSTAYALSAGGPIMHPKLDAIVIVPMYPHTLSGRPIVVDGNSELKIVVSKDLQIYPQVSCDGQNHFTCAPGDTITVSKKPQKLRLIHPLDHNYYEVCRTKLGWGSRLGSRDD</sequence>
<dbReference type="EC" id="2.7.1.23" evidence="1"/>
<dbReference type="EMBL" id="CP000926">
    <property type="protein sequence ID" value="ABY97449.1"/>
    <property type="molecule type" value="Genomic_DNA"/>
</dbReference>
<dbReference type="RefSeq" id="WP_012271216.1">
    <property type="nucleotide sequence ID" value="NC_010322.1"/>
</dbReference>
<dbReference type="SMR" id="B0KFA9"/>
<dbReference type="KEGG" id="ppg:PputGB1_1544"/>
<dbReference type="eggNOG" id="COG0061">
    <property type="taxonomic scope" value="Bacteria"/>
</dbReference>
<dbReference type="HOGENOM" id="CLU_008831_0_1_6"/>
<dbReference type="Proteomes" id="UP000002157">
    <property type="component" value="Chromosome"/>
</dbReference>
<dbReference type="GO" id="GO:0005737">
    <property type="term" value="C:cytoplasm"/>
    <property type="evidence" value="ECO:0007669"/>
    <property type="project" value="UniProtKB-SubCell"/>
</dbReference>
<dbReference type="GO" id="GO:0005524">
    <property type="term" value="F:ATP binding"/>
    <property type="evidence" value="ECO:0007669"/>
    <property type="project" value="UniProtKB-KW"/>
</dbReference>
<dbReference type="GO" id="GO:0046872">
    <property type="term" value="F:metal ion binding"/>
    <property type="evidence" value="ECO:0007669"/>
    <property type="project" value="UniProtKB-UniRule"/>
</dbReference>
<dbReference type="GO" id="GO:0051287">
    <property type="term" value="F:NAD binding"/>
    <property type="evidence" value="ECO:0007669"/>
    <property type="project" value="UniProtKB-ARBA"/>
</dbReference>
<dbReference type="GO" id="GO:0003951">
    <property type="term" value="F:NAD+ kinase activity"/>
    <property type="evidence" value="ECO:0007669"/>
    <property type="project" value="UniProtKB-UniRule"/>
</dbReference>
<dbReference type="GO" id="GO:0019674">
    <property type="term" value="P:NAD metabolic process"/>
    <property type="evidence" value="ECO:0007669"/>
    <property type="project" value="InterPro"/>
</dbReference>
<dbReference type="GO" id="GO:0006741">
    <property type="term" value="P:NADP biosynthetic process"/>
    <property type="evidence" value="ECO:0007669"/>
    <property type="project" value="UniProtKB-UniRule"/>
</dbReference>
<dbReference type="FunFam" id="2.60.200.30:FF:000001">
    <property type="entry name" value="NAD kinase"/>
    <property type="match status" value="1"/>
</dbReference>
<dbReference type="Gene3D" id="3.40.50.10330">
    <property type="entry name" value="Probable inorganic polyphosphate/atp-NAD kinase, domain 1"/>
    <property type="match status" value="1"/>
</dbReference>
<dbReference type="Gene3D" id="2.60.200.30">
    <property type="entry name" value="Probable inorganic polyphosphate/atp-NAD kinase, domain 2"/>
    <property type="match status" value="1"/>
</dbReference>
<dbReference type="HAMAP" id="MF_00361">
    <property type="entry name" value="NAD_kinase"/>
    <property type="match status" value="1"/>
</dbReference>
<dbReference type="InterPro" id="IPR017438">
    <property type="entry name" value="ATP-NAD_kinase_N"/>
</dbReference>
<dbReference type="InterPro" id="IPR017437">
    <property type="entry name" value="ATP-NAD_kinase_PpnK-typ_C"/>
</dbReference>
<dbReference type="InterPro" id="IPR016064">
    <property type="entry name" value="NAD/diacylglycerol_kinase_sf"/>
</dbReference>
<dbReference type="InterPro" id="IPR002504">
    <property type="entry name" value="NADK"/>
</dbReference>
<dbReference type="NCBIfam" id="NF002306">
    <property type="entry name" value="PRK01231.1"/>
    <property type="match status" value="1"/>
</dbReference>
<dbReference type="PANTHER" id="PTHR20275">
    <property type="entry name" value="NAD KINASE"/>
    <property type="match status" value="1"/>
</dbReference>
<dbReference type="PANTHER" id="PTHR20275:SF0">
    <property type="entry name" value="NAD KINASE"/>
    <property type="match status" value="1"/>
</dbReference>
<dbReference type="Pfam" id="PF01513">
    <property type="entry name" value="NAD_kinase"/>
    <property type="match status" value="1"/>
</dbReference>
<dbReference type="Pfam" id="PF20143">
    <property type="entry name" value="NAD_kinase_C"/>
    <property type="match status" value="1"/>
</dbReference>
<dbReference type="SUPFAM" id="SSF111331">
    <property type="entry name" value="NAD kinase/diacylglycerol kinase-like"/>
    <property type="match status" value="1"/>
</dbReference>
<gene>
    <name evidence="1" type="primary">nadK</name>
    <name type="ordered locus">PputGB1_1544</name>
</gene>
<proteinExistence type="inferred from homology"/>
<feature type="chain" id="PRO_1000079506" description="NAD kinase">
    <location>
        <begin position="1"/>
        <end position="296"/>
    </location>
</feature>
<feature type="active site" description="Proton acceptor" evidence="1">
    <location>
        <position position="72"/>
    </location>
</feature>
<feature type="binding site" evidence="1">
    <location>
        <begin position="72"/>
        <end position="73"/>
    </location>
    <ligand>
        <name>NAD(+)</name>
        <dbReference type="ChEBI" id="CHEBI:57540"/>
    </ligand>
</feature>
<feature type="binding site" evidence="1">
    <location>
        <begin position="146"/>
        <end position="147"/>
    </location>
    <ligand>
        <name>NAD(+)</name>
        <dbReference type="ChEBI" id="CHEBI:57540"/>
    </ligand>
</feature>
<feature type="binding site" evidence="1">
    <location>
        <position position="157"/>
    </location>
    <ligand>
        <name>NAD(+)</name>
        <dbReference type="ChEBI" id="CHEBI:57540"/>
    </ligand>
</feature>
<feature type="binding site" evidence="1">
    <location>
        <position position="174"/>
    </location>
    <ligand>
        <name>NAD(+)</name>
        <dbReference type="ChEBI" id="CHEBI:57540"/>
    </ligand>
</feature>
<feature type="binding site" evidence="1">
    <location>
        <position position="176"/>
    </location>
    <ligand>
        <name>NAD(+)</name>
        <dbReference type="ChEBI" id="CHEBI:57540"/>
    </ligand>
</feature>
<feature type="binding site" evidence="1">
    <location>
        <begin position="187"/>
        <end position="192"/>
    </location>
    <ligand>
        <name>NAD(+)</name>
        <dbReference type="ChEBI" id="CHEBI:57540"/>
    </ligand>
</feature>
<feature type="binding site" evidence="1">
    <location>
        <position position="247"/>
    </location>
    <ligand>
        <name>NAD(+)</name>
        <dbReference type="ChEBI" id="CHEBI:57540"/>
    </ligand>
</feature>
<name>NADK_PSEPG</name>
<reference key="1">
    <citation type="submission" date="2008-01" db="EMBL/GenBank/DDBJ databases">
        <title>Complete sequence of Pseudomonas putida GB-1.</title>
        <authorList>
            <consortium name="US DOE Joint Genome Institute"/>
            <person name="Copeland A."/>
            <person name="Lucas S."/>
            <person name="Lapidus A."/>
            <person name="Barry K."/>
            <person name="Glavina del Rio T."/>
            <person name="Dalin E."/>
            <person name="Tice H."/>
            <person name="Pitluck S."/>
            <person name="Bruce D."/>
            <person name="Goodwin L."/>
            <person name="Chertkov O."/>
            <person name="Brettin T."/>
            <person name="Detter J.C."/>
            <person name="Han C."/>
            <person name="Kuske C.R."/>
            <person name="Schmutz J."/>
            <person name="Larimer F."/>
            <person name="Land M."/>
            <person name="Hauser L."/>
            <person name="Kyrpides N."/>
            <person name="Kim E."/>
            <person name="McCarthy J.K."/>
            <person name="Richardson P."/>
        </authorList>
    </citation>
    <scope>NUCLEOTIDE SEQUENCE [LARGE SCALE GENOMIC DNA]</scope>
    <source>
        <strain>GB-1</strain>
    </source>
</reference>
<evidence type="ECO:0000255" key="1">
    <source>
        <dbReference type="HAMAP-Rule" id="MF_00361"/>
    </source>
</evidence>
<keyword id="KW-0067">ATP-binding</keyword>
<keyword id="KW-0963">Cytoplasm</keyword>
<keyword id="KW-0418">Kinase</keyword>
<keyword id="KW-0520">NAD</keyword>
<keyword id="KW-0521">NADP</keyword>
<keyword id="KW-0547">Nucleotide-binding</keyword>
<keyword id="KW-0808">Transferase</keyword>
<protein>
    <recommendedName>
        <fullName evidence="1">NAD kinase</fullName>
        <ecNumber evidence="1">2.7.1.23</ecNumber>
    </recommendedName>
    <alternativeName>
        <fullName evidence="1">ATP-dependent NAD kinase</fullName>
    </alternativeName>
</protein>
<organism>
    <name type="scientific">Pseudomonas putida (strain GB-1)</name>
    <dbReference type="NCBI Taxonomy" id="76869"/>
    <lineage>
        <taxon>Bacteria</taxon>
        <taxon>Pseudomonadati</taxon>
        <taxon>Pseudomonadota</taxon>
        <taxon>Gammaproteobacteria</taxon>
        <taxon>Pseudomonadales</taxon>
        <taxon>Pseudomonadaceae</taxon>
        <taxon>Pseudomonas</taxon>
    </lineage>
</organism>
<accession>B0KFA9</accession>
<comment type="function">
    <text evidence="1">Involved in the regulation of the intracellular balance of NAD and NADP, and is a key enzyme in the biosynthesis of NADP. Catalyzes specifically the phosphorylation on 2'-hydroxyl of the adenosine moiety of NAD to yield NADP.</text>
</comment>
<comment type="catalytic activity">
    <reaction evidence="1">
        <text>NAD(+) + ATP = ADP + NADP(+) + H(+)</text>
        <dbReference type="Rhea" id="RHEA:18629"/>
        <dbReference type="ChEBI" id="CHEBI:15378"/>
        <dbReference type="ChEBI" id="CHEBI:30616"/>
        <dbReference type="ChEBI" id="CHEBI:57540"/>
        <dbReference type="ChEBI" id="CHEBI:58349"/>
        <dbReference type="ChEBI" id="CHEBI:456216"/>
        <dbReference type="EC" id="2.7.1.23"/>
    </reaction>
</comment>
<comment type="cofactor">
    <cofactor evidence="1">
        <name>a divalent metal cation</name>
        <dbReference type="ChEBI" id="CHEBI:60240"/>
    </cofactor>
</comment>
<comment type="subcellular location">
    <subcellularLocation>
        <location evidence="1">Cytoplasm</location>
    </subcellularLocation>
</comment>
<comment type="similarity">
    <text evidence="1">Belongs to the NAD kinase family.</text>
</comment>